<feature type="chain" id="PRO_0000093236" description="Putative ABC transporter ATP-binding protein MG014 homolog">
    <location>
        <begin position="1"/>
        <end position="623"/>
    </location>
</feature>
<feature type="transmembrane region" description="Helical" evidence="2">
    <location>
        <begin position="27"/>
        <end position="47"/>
    </location>
</feature>
<feature type="transmembrane region" description="Helical" evidence="2">
    <location>
        <begin position="86"/>
        <end position="106"/>
    </location>
</feature>
<feature type="transmembrane region" description="Helical" evidence="2">
    <location>
        <begin position="157"/>
        <end position="177"/>
    </location>
</feature>
<feature type="transmembrane region" description="Helical" evidence="2">
    <location>
        <begin position="180"/>
        <end position="200"/>
    </location>
</feature>
<feature type="transmembrane region" description="Helical" evidence="2">
    <location>
        <begin position="266"/>
        <end position="286"/>
    </location>
</feature>
<feature type="transmembrane region" description="Helical" evidence="2">
    <location>
        <begin position="307"/>
        <end position="327"/>
    </location>
</feature>
<feature type="domain" description="ABC transmembrane type-1" evidence="2">
    <location>
        <begin position="16"/>
        <end position="325"/>
    </location>
</feature>
<feature type="domain" description="ABC transporter" evidence="1">
    <location>
        <begin position="365"/>
        <end position="611"/>
    </location>
</feature>
<feature type="binding site" evidence="1">
    <location>
        <begin position="400"/>
        <end position="407"/>
    </location>
    <ligand>
        <name>ATP</name>
        <dbReference type="ChEBI" id="CHEBI:30616"/>
    </ligand>
</feature>
<evidence type="ECO:0000255" key="1">
    <source>
        <dbReference type="PROSITE-ProRule" id="PRU00434"/>
    </source>
</evidence>
<evidence type="ECO:0000255" key="2">
    <source>
        <dbReference type="PROSITE-ProRule" id="PRU00441"/>
    </source>
</evidence>
<evidence type="ECO:0000305" key="3"/>
<comment type="subcellular location">
    <subcellularLocation>
        <location evidence="3">Cell membrane</location>
        <topology evidence="2">Multi-pass membrane protein</topology>
    </subcellularLocation>
</comment>
<comment type="similarity">
    <text evidence="3">Belongs to the ABC transporter superfamily.</text>
</comment>
<accession>P75095</accession>
<sequence>MGLVLKQFNRKIRTALILAPLFTFAQIIIDLIIPSFLASAIAVVFSIVTLKQKEASGEGVAVDFIAESKLSFQSVQEAQIVLATSVILLALFGLVFGLISIFCASIVAGNTSYFLRRKIFRKIMHITAPSHDQYGSSTLLVRLTNDVYLMEIMTFDFLRLIVRAPFLFIGGLAFAIATNSDMSISLAITFPLTFLVIGILNKKSTPLFKNNQKSVDQINERVEEDVSGYKVVQSFNLKDTECLKFKAANARWTKSSTNSLFVNTLNIPFTFFFSSMTIIIALLLVFQLDNSVRVDPLPDNAAIRPSIFAFFQYNFYIVLGLILTSLTMVNFTRSRVALGRIKDVLNKPEIQQHVVPDQTVLAPSLEFKNVAFGLGNKENRDFLQDLNFKFEAGKTYGIVGPTGSGKSLIANIIGGLYEPNQGEIFVGGQSIKTIDSDYLAKMIGIVFQQNILFKGTIASNIKIGLETREDWKHEPDSKKDAAMKRAAAIACADTFIEKFSDTYDHTVEQLGKNLSGGQKQRVAIARTVITKPQILVLDDSMSALDALTEKKVRENIANELPGTTKIIISQNINSIKYAHKIMVIDNGRIAGFDSDAKLMQSCDIYVKMKQAQKDQGGDFDAVA</sequence>
<organism>
    <name type="scientific">Mycoplasma pneumoniae (strain ATCC 29342 / M129 / Subtype 1)</name>
    <name type="common">Mycoplasmoides pneumoniae</name>
    <dbReference type="NCBI Taxonomy" id="272634"/>
    <lineage>
        <taxon>Bacteria</taxon>
        <taxon>Bacillati</taxon>
        <taxon>Mycoplasmatota</taxon>
        <taxon>Mycoplasmoidales</taxon>
        <taxon>Mycoplasmoidaceae</taxon>
        <taxon>Mycoplasmoides</taxon>
    </lineage>
</organism>
<keyword id="KW-0067">ATP-binding</keyword>
<keyword id="KW-1003">Cell membrane</keyword>
<keyword id="KW-0472">Membrane</keyword>
<keyword id="KW-0547">Nucleotide-binding</keyword>
<keyword id="KW-1185">Reference proteome</keyword>
<keyword id="KW-0812">Transmembrane</keyword>
<keyword id="KW-1133">Transmembrane helix</keyword>
<keyword id="KW-0813">Transport</keyword>
<protein>
    <recommendedName>
        <fullName>Putative ABC transporter ATP-binding protein MG014 homolog</fullName>
    </recommendedName>
</protein>
<gene>
    <name type="ordered locus">MPN_018</name>
    <name type="ORF">D12_orf623</name>
    <name type="ORF">MP136</name>
</gene>
<reference key="1">
    <citation type="journal article" date="1996" name="Nucleic Acids Res.">
        <title>Complete sequence analysis of the genome of the bacterium Mycoplasma pneumoniae.</title>
        <authorList>
            <person name="Himmelreich R."/>
            <person name="Hilbert H."/>
            <person name="Plagens H."/>
            <person name="Pirkl E."/>
            <person name="Li B.-C."/>
            <person name="Herrmann R."/>
        </authorList>
    </citation>
    <scope>NUCLEOTIDE SEQUENCE [LARGE SCALE GENOMIC DNA]</scope>
    <source>
        <strain>ATCC 29342 / M129 / Subtype 1</strain>
    </source>
</reference>
<name>Y018_MYCPN</name>
<proteinExistence type="inferred from homology"/>
<dbReference type="EMBL" id="U00089">
    <property type="protein sequence ID" value="AAB95784.1"/>
    <property type="molecule type" value="Genomic_DNA"/>
</dbReference>
<dbReference type="PIR" id="S73462">
    <property type="entry name" value="S73462"/>
</dbReference>
<dbReference type="RefSeq" id="NP_109706.1">
    <property type="nucleotide sequence ID" value="NC_000912.1"/>
</dbReference>
<dbReference type="RefSeq" id="WP_010874375.1">
    <property type="nucleotide sequence ID" value="NZ_OU342337.1"/>
</dbReference>
<dbReference type="SMR" id="P75095"/>
<dbReference type="STRING" id="272634.MPN_018"/>
<dbReference type="EnsemblBacteria" id="AAB95784">
    <property type="protein sequence ID" value="AAB95784"/>
    <property type="gene ID" value="MPN_018"/>
</dbReference>
<dbReference type="KEGG" id="mpn:MPN_018"/>
<dbReference type="PATRIC" id="fig|272634.6.peg.17"/>
<dbReference type="HOGENOM" id="CLU_000604_84_3_14"/>
<dbReference type="OrthoDB" id="383768at2"/>
<dbReference type="BioCyc" id="MPNE272634:G1GJ3-28-MONOMER"/>
<dbReference type="Proteomes" id="UP000000808">
    <property type="component" value="Chromosome"/>
</dbReference>
<dbReference type="GO" id="GO:0005886">
    <property type="term" value="C:plasma membrane"/>
    <property type="evidence" value="ECO:0007669"/>
    <property type="project" value="UniProtKB-SubCell"/>
</dbReference>
<dbReference type="GO" id="GO:0015421">
    <property type="term" value="F:ABC-type oligopeptide transporter activity"/>
    <property type="evidence" value="ECO:0007669"/>
    <property type="project" value="TreeGrafter"/>
</dbReference>
<dbReference type="GO" id="GO:0005524">
    <property type="term" value="F:ATP binding"/>
    <property type="evidence" value="ECO:0007669"/>
    <property type="project" value="UniProtKB-KW"/>
</dbReference>
<dbReference type="GO" id="GO:0016887">
    <property type="term" value="F:ATP hydrolysis activity"/>
    <property type="evidence" value="ECO:0007669"/>
    <property type="project" value="InterPro"/>
</dbReference>
<dbReference type="CDD" id="cd18548">
    <property type="entry name" value="ABC_6TM_Tm287_like"/>
    <property type="match status" value="1"/>
</dbReference>
<dbReference type="FunFam" id="3.40.50.300:FF:000854">
    <property type="entry name" value="Multidrug ABC transporter ATP-binding protein"/>
    <property type="match status" value="1"/>
</dbReference>
<dbReference type="Gene3D" id="1.20.1560.10">
    <property type="entry name" value="ABC transporter type 1, transmembrane domain"/>
    <property type="match status" value="1"/>
</dbReference>
<dbReference type="Gene3D" id="3.40.50.300">
    <property type="entry name" value="P-loop containing nucleotide triphosphate hydrolases"/>
    <property type="match status" value="1"/>
</dbReference>
<dbReference type="InterPro" id="IPR003593">
    <property type="entry name" value="AAA+_ATPase"/>
</dbReference>
<dbReference type="InterPro" id="IPR011527">
    <property type="entry name" value="ABC1_TM_dom"/>
</dbReference>
<dbReference type="InterPro" id="IPR036640">
    <property type="entry name" value="ABC1_TM_sf"/>
</dbReference>
<dbReference type="InterPro" id="IPR003439">
    <property type="entry name" value="ABC_transporter-like_ATP-bd"/>
</dbReference>
<dbReference type="InterPro" id="IPR017871">
    <property type="entry name" value="ABC_transporter-like_CS"/>
</dbReference>
<dbReference type="InterPro" id="IPR027417">
    <property type="entry name" value="P-loop_NTPase"/>
</dbReference>
<dbReference type="InterPro" id="IPR039421">
    <property type="entry name" value="Type_1_exporter"/>
</dbReference>
<dbReference type="PANTHER" id="PTHR43394:SF1">
    <property type="entry name" value="ATP-BINDING CASSETTE SUB-FAMILY B MEMBER 10, MITOCHONDRIAL"/>
    <property type="match status" value="1"/>
</dbReference>
<dbReference type="PANTHER" id="PTHR43394">
    <property type="entry name" value="ATP-DEPENDENT PERMEASE MDL1, MITOCHONDRIAL"/>
    <property type="match status" value="1"/>
</dbReference>
<dbReference type="Pfam" id="PF00664">
    <property type="entry name" value="ABC_membrane"/>
    <property type="match status" value="1"/>
</dbReference>
<dbReference type="Pfam" id="PF00005">
    <property type="entry name" value="ABC_tran"/>
    <property type="match status" value="1"/>
</dbReference>
<dbReference type="SMART" id="SM00382">
    <property type="entry name" value="AAA"/>
    <property type="match status" value="1"/>
</dbReference>
<dbReference type="SUPFAM" id="SSF90123">
    <property type="entry name" value="ABC transporter transmembrane region"/>
    <property type="match status" value="1"/>
</dbReference>
<dbReference type="SUPFAM" id="SSF52540">
    <property type="entry name" value="P-loop containing nucleoside triphosphate hydrolases"/>
    <property type="match status" value="1"/>
</dbReference>
<dbReference type="PROSITE" id="PS50929">
    <property type="entry name" value="ABC_TM1F"/>
    <property type="match status" value="1"/>
</dbReference>
<dbReference type="PROSITE" id="PS00211">
    <property type="entry name" value="ABC_TRANSPORTER_1"/>
    <property type="match status" value="1"/>
</dbReference>
<dbReference type="PROSITE" id="PS50893">
    <property type="entry name" value="ABC_TRANSPORTER_2"/>
    <property type="match status" value="1"/>
</dbReference>